<sequence>MPRRRLIGQRKILPDPKLGSERLAKFINILMKNGKKSLAETIVYSALEIIAKRSGKNYLEAFEAALDNVRPAIEVKSRRVGGSTYQVPVEVRSIRRDTLAMRWIVEAARKRSDKSMAIRLANELVDATEHKGAAVKKREEVHRMADANKAFAHYRW</sequence>
<name>RS7_BAUCH</name>
<gene>
    <name evidence="1" type="primary">rpsG</name>
    <name type="ordered locus">BCI_0493</name>
</gene>
<evidence type="ECO:0000255" key="1">
    <source>
        <dbReference type="HAMAP-Rule" id="MF_00480"/>
    </source>
</evidence>
<evidence type="ECO:0000305" key="2"/>
<reference key="1">
    <citation type="journal article" date="2006" name="PLoS Biol.">
        <title>Metabolic complementarity and genomics of the dual bacterial symbiosis of sharpshooters.</title>
        <authorList>
            <person name="Wu D."/>
            <person name="Daugherty S.C."/>
            <person name="Van Aken S.E."/>
            <person name="Pai G.H."/>
            <person name="Watkins K.L."/>
            <person name="Khouri H."/>
            <person name="Tallon L.J."/>
            <person name="Zaborsky J.M."/>
            <person name="Dunbar H.E."/>
            <person name="Tran P.L."/>
            <person name="Moran N.A."/>
            <person name="Eisen J.A."/>
        </authorList>
    </citation>
    <scope>NUCLEOTIDE SEQUENCE [LARGE SCALE GENOMIC DNA]</scope>
</reference>
<feature type="chain" id="PRO_1000014148" description="Small ribosomal subunit protein uS7">
    <location>
        <begin position="1"/>
        <end position="156"/>
    </location>
</feature>
<proteinExistence type="inferred from homology"/>
<organism>
    <name type="scientific">Baumannia cicadellinicola subsp. Homalodisca coagulata</name>
    <dbReference type="NCBI Taxonomy" id="374463"/>
    <lineage>
        <taxon>Bacteria</taxon>
        <taxon>Pseudomonadati</taxon>
        <taxon>Pseudomonadota</taxon>
        <taxon>Gammaproteobacteria</taxon>
        <taxon>Candidatus Palibaumannia</taxon>
    </lineage>
</organism>
<comment type="function">
    <text evidence="1">One of the primary rRNA binding proteins, it binds directly to 16S rRNA where it nucleates assembly of the head domain of the 30S subunit. Is located at the subunit interface close to the decoding center, probably blocks exit of the E-site tRNA.</text>
</comment>
<comment type="subunit">
    <text evidence="1">Part of the 30S ribosomal subunit. Contacts proteins S9 and S11.</text>
</comment>
<comment type="similarity">
    <text evidence="1">Belongs to the universal ribosomal protein uS7 family.</text>
</comment>
<accession>Q1LSY6</accession>
<dbReference type="EMBL" id="CP000238">
    <property type="protein sequence ID" value="ABF13805.1"/>
    <property type="molecule type" value="Genomic_DNA"/>
</dbReference>
<dbReference type="RefSeq" id="WP_011520661.1">
    <property type="nucleotide sequence ID" value="NC_007984.1"/>
</dbReference>
<dbReference type="SMR" id="Q1LSY6"/>
<dbReference type="STRING" id="374463.BCI_0493"/>
<dbReference type="KEGG" id="bci:BCI_0493"/>
<dbReference type="HOGENOM" id="CLU_072226_1_1_6"/>
<dbReference type="OrthoDB" id="9807653at2"/>
<dbReference type="Proteomes" id="UP000002427">
    <property type="component" value="Chromosome"/>
</dbReference>
<dbReference type="GO" id="GO:0015935">
    <property type="term" value="C:small ribosomal subunit"/>
    <property type="evidence" value="ECO:0007669"/>
    <property type="project" value="InterPro"/>
</dbReference>
<dbReference type="GO" id="GO:0019843">
    <property type="term" value="F:rRNA binding"/>
    <property type="evidence" value="ECO:0007669"/>
    <property type="project" value="UniProtKB-UniRule"/>
</dbReference>
<dbReference type="GO" id="GO:0003735">
    <property type="term" value="F:structural constituent of ribosome"/>
    <property type="evidence" value="ECO:0007669"/>
    <property type="project" value="InterPro"/>
</dbReference>
<dbReference type="GO" id="GO:0000049">
    <property type="term" value="F:tRNA binding"/>
    <property type="evidence" value="ECO:0007669"/>
    <property type="project" value="UniProtKB-UniRule"/>
</dbReference>
<dbReference type="GO" id="GO:0006412">
    <property type="term" value="P:translation"/>
    <property type="evidence" value="ECO:0007669"/>
    <property type="project" value="UniProtKB-UniRule"/>
</dbReference>
<dbReference type="CDD" id="cd14869">
    <property type="entry name" value="uS7_Bacteria"/>
    <property type="match status" value="1"/>
</dbReference>
<dbReference type="FunFam" id="1.10.455.10:FF:000001">
    <property type="entry name" value="30S ribosomal protein S7"/>
    <property type="match status" value="1"/>
</dbReference>
<dbReference type="Gene3D" id="1.10.455.10">
    <property type="entry name" value="Ribosomal protein S7 domain"/>
    <property type="match status" value="1"/>
</dbReference>
<dbReference type="HAMAP" id="MF_00480_B">
    <property type="entry name" value="Ribosomal_uS7_B"/>
    <property type="match status" value="1"/>
</dbReference>
<dbReference type="InterPro" id="IPR000235">
    <property type="entry name" value="Ribosomal_uS7"/>
</dbReference>
<dbReference type="InterPro" id="IPR005717">
    <property type="entry name" value="Ribosomal_uS7_bac/org-type"/>
</dbReference>
<dbReference type="InterPro" id="IPR023798">
    <property type="entry name" value="Ribosomal_uS7_dom"/>
</dbReference>
<dbReference type="InterPro" id="IPR036823">
    <property type="entry name" value="Ribosomal_uS7_dom_sf"/>
</dbReference>
<dbReference type="NCBIfam" id="TIGR01029">
    <property type="entry name" value="rpsG_bact"/>
    <property type="match status" value="1"/>
</dbReference>
<dbReference type="PANTHER" id="PTHR11205">
    <property type="entry name" value="RIBOSOMAL PROTEIN S7"/>
    <property type="match status" value="1"/>
</dbReference>
<dbReference type="Pfam" id="PF00177">
    <property type="entry name" value="Ribosomal_S7"/>
    <property type="match status" value="1"/>
</dbReference>
<dbReference type="PIRSF" id="PIRSF002122">
    <property type="entry name" value="RPS7p_RPS7a_RPS5e_RPS7o"/>
    <property type="match status" value="1"/>
</dbReference>
<dbReference type="SUPFAM" id="SSF47973">
    <property type="entry name" value="Ribosomal protein S7"/>
    <property type="match status" value="1"/>
</dbReference>
<protein>
    <recommendedName>
        <fullName evidence="1">Small ribosomal subunit protein uS7</fullName>
    </recommendedName>
    <alternativeName>
        <fullName evidence="2">30S ribosomal protein S7</fullName>
    </alternativeName>
</protein>
<keyword id="KW-1185">Reference proteome</keyword>
<keyword id="KW-0687">Ribonucleoprotein</keyword>
<keyword id="KW-0689">Ribosomal protein</keyword>
<keyword id="KW-0694">RNA-binding</keyword>
<keyword id="KW-0699">rRNA-binding</keyword>
<keyword id="KW-0820">tRNA-binding</keyword>